<dbReference type="EMBL" id="AE005674">
    <property type="protein sequence ID" value="AAN44327.1"/>
    <property type="molecule type" value="Genomic_DNA"/>
</dbReference>
<dbReference type="EMBL" id="AE014073">
    <property type="protein sequence ID" value="AAP18153.1"/>
    <property type="molecule type" value="Genomic_DNA"/>
</dbReference>
<dbReference type="RefSeq" id="NP_708620.1">
    <property type="nucleotide sequence ID" value="NC_004337.2"/>
</dbReference>
<dbReference type="RefSeq" id="WP_000082200.1">
    <property type="nucleotide sequence ID" value="NZ_CP123365.1"/>
</dbReference>
<dbReference type="SMR" id="Q83QC1"/>
<dbReference type="STRING" id="198214.SF2841"/>
<dbReference type="PaxDb" id="198214-SF2841"/>
<dbReference type="GeneID" id="1024298"/>
<dbReference type="KEGG" id="sfl:SF2841"/>
<dbReference type="KEGG" id="sfx:S3039"/>
<dbReference type="PATRIC" id="fig|198214.7.peg.3381"/>
<dbReference type="HOGENOM" id="CLU_086669_0_0_6"/>
<dbReference type="Proteomes" id="UP000001006">
    <property type="component" value="Chromosome"/>
</dbReference>
<dbReference type="Proteomes" id="UP000002673">
    <property type="component" value="Chromosome"/>
</dbReference>
<dbReference type="GO" id="GO:0005737">
    <property type="term" value="C:cytoplasm"/>
    <property type="evidence" value="ECO:0007669"/>
    <property type="project" value="UniProtKB-SubCell"/>
</dbReference>
<dbReference type="GO" id="GO:0003677">
    <property type="term" value="F:DNA binding"/>
    <property type="evidence" value="ECO:0007669"/>
    <property type="project" value="InterPro"/>
</dbReference>
<dbReference type="GO" id="GO:0004519">
    <property type="term" value="F:endonuclease activity"/>
    <property type="evidence" value="ECO:0007669"/>
    <property type="project" value="UniProtKB-UniRule"/>
</dbReference>
<dbReference type="GO" id="GO:0006304">
    <property type="term" value="P:DNA modification"/>
    <property type="evidence" value="ECO:0007669"/>
    <property type="project" value="InterPro"/>
</dbReference>
<dbReference type="GO" id="GO:0006298">
    <property type="term" value="P:mismatch repair"/>
    <property type="evidence" value="ECO:0007669"/>
    <property type="project" value="UniProtKB-UniRule"/>
</dbReference>
<dbReference type="CDD" id="cd00583">
    <property type="entry name" value="MutH-like"/>
    <property type="match status" value="1"/>
</dbReference>
<dbReference type="FunFam" id="3.40.600.10:FF:000001">
    <property type="entry name" value="DNA mismatch repair protein MutH"/>
    <property type="match status" value="1"/>
</dbReference>
<dbReference type="Gene3D" id="3.40.600.10">
    <property type="entry name" value="DNA mismatch repair MutH/Restriction endonuclease, type II"/>
    <property type="match status" value="1"/>
</dbReference>
<dbReference type="HAMAP" id="MF_00759">
    <property type="entry name" value="MutH"/>
    <property type="match status" value="1"/>
</dbReference>
<dbReference type="InterPro" id="IPR004230">
    <property type="entry name" value="DNA_mismatch_repair_MutH"/>
</dbReference>
<dbReference type="InterPro" id="IPR011337">
    <property type="entry name" value="DNA_rep_MutH/RE_typeII_Sau3AI"/>
</dbReference>
<dbReference type="InterPro" id="IPR037057">
    <property type="entry name" value="DNA_rep_MutH/T2_RE_sf"/>
</dbReference>
<dbReference type="InterPro" id="IPR011335">
    <property type="entry name" value="Restrct_endonuc-II-like"/>
</dbReference>
<dbReference type="NCBIfam" id="TIGR02248">
    <property type="entry name" value="mutH_TIGR"/>
    <property type="match status" value="1"/>
</dbReference>
<dbReference type="NCBIfam" id="NF003458">
    <property type="entry name" value="PRK05070.1"/>
    <property type="match status" value="1"/>
</dbReference>
<dbReference type="Pfam" id="PF02976">
    <property type="entry name" value="MutH"/>
    <property type="match status" value="1"/>
</dbReference>
<dbReference type="SMART" id="SM00927">
    <property type="entry name" value="MutH"/>
    <property type="match status" value="1"/>
</dbReference>
<dbReference type="SUPFAM" id="SSF52980">
    <property type="entry name" value="Restriction endonuclease-like"/>
    <property type="match status" value="1"/>
</dbReference>
<feature type="initiator methionine" description="Removed" evidence="1">
    <location>
        <position position="1"/>
    </location>
</feature>
<feature type="chain" id="PRO_0000198675" description="DNA mismatch repair protein MutH">
    <location>
        <begin position="2"/>
        <end position="229"/>
    </location>
</feature>
<feature type="sequence conflict" description="In Ref. 2; AAP18153." evidence="3" ref="2">
    <original>S</original>
    <variation>F</variation>
    <location>
        <position position="226"/>
    </location>
</feature>
<accession>Q83QC1</accession>
<accession>Q7UBR5</accession>
<evidence type="ECO:0000250" key="1"/>
<evidence type="ECO:0000255" key="2">
    <source>
        <dbReference type="HAMAP-Rule" id="MF_00759"/>
    </source>
</evidence>
<evidence type="ECO:0000305" key="3"/>
<comment type="function">
    <text evidence="2">Sequence-specific endonuclease that cleaves unmethylated GATC sequences. It is involved in DNA mismatch repair.</text>
</comment>
<comment type="subcellular location">
    <subcellularLocation>
        <location evidence="2">Cytoplasm</location>
    </subcellularLocation>
</comment>
<comment type="similarity">
    <text evidence="2">Belongs to the MutH family.</text>
</comment>
<name>MUTH_SHIFL</name>
<gene>
    <name evidence="2" type="primary">mutH</name>
    <name type="ordered locus">SF2841</name>
    <name type="ordered locus">S3039</name>
</gene>
<keyword id="KW-0963">Cytoplasm</keyword>
<keyword id="KW-0227">DNA damage</keyword>
<keyword id="KW-0234">DNA repair</keyword>
<keyword id="KW-0255">Endonuclease</keyword>
<keyword id="KW-0378">Hydrolase</keyword>
<keyword id="KW-0540">Nuclease</keyword>
<keyword id="KW-1185">Reference proteome</keyword>
<protein>
    <recommendedName>
        <fullName evidence="2">DNA mismatch repair protein MutH</fullName>
    </recommendedName>
    <alternativeName>
        <fullName evidence="2">Methyl-directed mismatch repair protein</fullName>
    </alternativeName>
</protein>
<sequence>MSQPRPLLSPPETEEQLLAQAQQLSGYTLGELAALDGLVTPENLKRDKGWIGVLLEIWLGASAGSKPEQDFAALGVELKTIPVDSLGRPLETTFVCVARLTGNSGVTWETSHVRHKLKRVLWIPVEGERSIPLAQRRVGSPLLWSPNEEEDRQLREDWEELMDMIVLGQVERITARHGEYLQIRPKAANAKALTEAIGARGERILTLPRGFYLKKNFTSALLARHSLIQ</sequence>
<proteinExistence type="inferred from homology"/>
<reference key="1">
    <citation type="journal article" date="2002" name="Nucleic Acids Res.">
        <title>Genome sequence of Shigella flexneri 2a: insights into pathogenicity through comparison with genomes of Escherichia coli K12 and O157.</title>
        <authorList>
            <person name="Jin Q."/>
            <person name="Yuan Z."/>
            <person name="Xu J."/>
            <person name="Wang Y."/>
            <person name="Shen Y."/>
            <person name="Lu W."/>
            <person name="Wang J."/>
            <person name="Liu H."/>
            <person name="Yang J."/>
            <person name="Yang F."/>
            <person name="Zhang X."/>
            <person name="Zhang J."/>
            <person name="Yang G."/>
            <person name="Wu H."/>
            <person name="Qu D."/>
            <person name="Dong J."/>
            <person name="Sun L."/>
            <person name="Xue Y."/>
            <person name="Zhao A."/>
            <person name="Gao Y."/>
            <person name="Zhu J."/>
            <person name="Kan B."/>
            <person name="Ding K."/>
            <person name="Chen S."/>
            <person name="Cheng H."/>
            <person name="Yao Z."/>
            <person name="He B."/>
            <person name="Chen R."/>
            <person name="Ma D."/>
            <person name="Qiang B."/>
            <person name="Wen Y."/>
            <person name="Hou Y."/>
            <person name="Yu J."/>
        </authorList>
    </citation>
    <scope>NUCLEOTIDE SEQUENCE [LARGE SCALE GENOMIC DNA]</scope>
    <source>
        <strain>301 / Serotype 2a</strain>
    </source>
</reference>
<reference key="2">
    <citation type="journal article" date="2003" name="Infect. Immun.">
        <title>Complete genome sequence and comparative genomics of Shigella flexneri serotype 2a strain 2457T.</title>
        <authorList>
            <person name="Wei J."/>
            <person name="Goldberg M.B."/>
            <person name="Burland V."/>
            <person name="Venkatesan M.M."/>
            <person name="Deng W."/>
            <person name="Fournier G."/>
            <person name="Mayhew G.F."/>
            <person name="Plunkett G. III"/>
            <person name="Rose D.J."/>
            <person name="Darling A."/>
            <person name="Mau B."/>
            <person name="Perna N.T."/>
            <person name="Payne S.M."/>
            <person name="Runyen-Janecky L.J."/>
            <person name="Zhou S."/>
            <person name="Schwartz D.C."/>
            <person name="Blattner F.R."/>
        </authorList>
    </citation>
    <scope>NUCLEOTIDE SEQUENCE [LARGE SCALE GENOMIC DNA]</scope>
    <source>
        <strain>ATCC 700930 / 2457T / Serotype 2a</strain>
    </source>
</reference>
<organism>
    <name type="scientific">Shigella flexneri</name>
    <dbReference type="NCBI Taxonomy" id="623"/>
    <lineage>
        <taxon>Bacteria</taxon>
        <taxon>Pseudomonadati</taxon>
        <taxon>Pseudomonadota</taxon>
        <taxon>Gammaproteobacteria</taxon>
        <taxon>Enterobacterales</taxon>
        <taxon>Enterobacteriaceae</taxon>
        <taxon>Shigella</taxon>
    </lineage>
</organism>